<keyword id="KW-0963">Cytoplasm</keyword>
<keyword id="KW-0460">Magnesium</keyword>
<keyword id="KW-0479">Metal-binding</keyword>
<keyword id="KW-0566">Pantothenate biosynthesis</keyword>
<keyword id="KW-0808">Transferase</keyword>
<proteinExistence type="inferred from homology"/>
<evidence type="ECO:0000255" key="1">
    <source>
        <dbReference type="HAMAP-Rule" id="MF_00156"/>
    </source>
</evidence>
<reference key="1">
    <citation type="journal article" date="2007" name="Nat. Biotechnol.">
        <title>Comparative analysis of the complete genome sequence of the plant growth-promoting bacterium Bacillus amyloliquefaciens FZB42.</title>
        <authorList>
            <person name="Chen X.H."/>
            <person name="Koumoutsi A."/>
            <person name="Scholz R."/>
            <person name="Eisenreich A."/>
            <person name="Schneider K."/>
            <person name="Heinemeyer I."/>
            <person name="Morgenstern B."/>
            <person name="Voss B."/>
            <person name="Hess W.R."/>
            <person name="Reva O."/>
            <person name="Junge H."/>
            <person name="Voigt B."/>
            <person name="Jungblut P.R."/>
            <person name="Vater J."/>
            <person name="Suessmuth R."/>
            <person name="Liesegang H."/>
            <person name="Strittmatter A."/>
            <person name="Gottschalk G."/>
            <person name="Borriss R."/>
        </authorList>
    </citation>
    <scope>NUCLEOTIDE SEQUENCE [LARGE SCALE GENOMIC DNA]</scope>
    <source>
        <strain>DSM 23117 / BGSC 10A6 / LMG 26770 / FZB42</strain>
    </source>
</reference>
<accession>A7Z5Z4</accession>
<comment type="function">
    <text evidence="1">Catalyzes the reversible reaction in which hydroxymethyl group from 5,10-methylenetetrahydrofolate is transferred onto alpha-ketoisovalerate to form ketopantoate.</text>
</comment>
<comment type="catalytic activity">
    <reaction evidence="1">
        <text>3-methyl-2-oxobutanoate + (6R)-5,10-methylene-5,6,7,8-tetrahydrofolate + H2O = 2-dehydropantoate + (6S)-5,6,7,8-tetrahydrofolate</text>
        <dbReference type="Rhea" id="RHEA:11824"/>
        <dbReference type="ChEBI" id="CHEBI:11561"/>
        <dbReference type="ChEBI" id="CHEBI:11851"/>
        <dbReference type="ChEBI" id="CHEBI:15377"/>
        <dbReference type="ChEBI" id="CHEBI:15636"/>
        <dbReference type="ChEBI" id="CHEBI:57453"/>
        <dbReference type="EC" id="2.1.2.11"/>
    </reaction>
</comment>
<comment type="cofactor">
    <cofactor evidence="1">
        <name>Mg(2+)</name>
        <dbReference type="ChEBI" id="CHEBI:18420"/>
    </cofactor>
    <text evidence="1">Binds 1 Mg(2+) ion per subunit.</text>
</comment>
<comment type="pathway">
    <text evidence="1">Cofactor biosynthesis; (R)-pantothenate biosynthesis; (R)-pantoate from 3-methyl-2-oxobutanoate: step 1/2.</text>
</comment>
<comment type="subunit">
    <text evidence="1">Homodecamer; pentamer of dimers.</text>
</comment>
<comment type="subcellular location">
    <subcellularLocation>
        <location evidence="1">Cytoplasm</location>
    </subcellularLocation>
</comment>
<comment type="similarity">
    <text evidence="1">Belongs to the PanB family.</text>
</comment>
<feature type="chain" id="PRO_1000011361" description="3-methyl-2-oxobutanoate hydroxymethyltransferase">
    <location>
        <begin position="1"/>
        <end position="277"/>
    </location>
</feature>
<feature type="active site" description="Proton acceptor" evidence="1">
    <location>
        <position position="181"/>
    </location>
</feature>
<feature type="binding site" evidence="1">
    <location>
        <begin position="43"/>
        <end position="44"/>
    </location>
    <ligand>
        <name>3-methyl-2-oxobutanoate</name>
        <dbReference type="ChEBI" id="CHEBI:11851"/>
    </ligand>
</feature>
<feature type="binding site" evidence="1">
    <location>
        <position position="43"/>
    </location>
    <ligand>
        <name>Mg(2+)</name>
        <dbReference type="ChEBI" id="CHEBI:18420"/>
    </ligand>
</feature>
<feature type="binding site" evidence="1">
    <location>
        <position position="82"/>
    </location>
    <ligand>
        <name>3-methyl-2-oxobutanoate</name>
        <dbReference type="ChEBI" id="CHEBI:11851"/>
    </ligand>
</feature>
<feature type="binding site" evidence="1">
    <location>
        <position position="82"/>
    </location>
    <ligand>
        <name>Mg(2+)</name>
        <dbReference type="ChEBI" id="CHEBI:18420"/>
    </ligand>
</feature>
<feature type="binding site" evidence="1">
    <location>
        <position position="112"/>
    </location>
    <ligand>
        <name>3-methyl-2-oxobutanoate</name>
        <dbReference type="ChEBI" id="CHEBI:11851"/>
    </ligand>
</feature>
<feature type="binding site" evidence="1">
    <location>
        <position position="114"/>
    </location>
    <ligand>
        <name>Mg(2+)</name>
        <dbReference type="ChEBI" id="CHEBI:18420"/>
    </ligand>
</feature>
<gene>
    <name evidence="1" type="primary">panB</name>
    <name type="ordered locus">RBAM_020580</name>
</gene>
<sequence>MKTKLDFVKMKENGEPIVMLTAYDYPQAKLAEQAGVDMILVGDSLGMVVLGLDSTVGVTVSDMIHHTKAVKRGAKNTFIVTDMPFMSYHLSKEDTLKNAAAIIQESGADALKLEGGDGVFESIRALTLGGIPVVSHLGLTPQSVGVLGGYKVQGKDEQSAKKLIEDSIKCEQAGAMMLVLECVPAELTAKIKEEVSIPVIGIGAGSKADGQVLVYHDVVGHGVDRTPKFVKQYAKIDGTIESALSGYVRDVKERVFPEEKHSFQINQTVLQGLYGGK</sequence>
<organism>
    <name type="scientific">Bacillus velezensis (strain DSM 23117 / BGSC 10A6 / LMG 26770 / FZB42)</name>
    <name type="common">Bacillus amyloliquefaciens subsp. plantarum</name>
    <dbReference type="NCBI Taxonomy" id="326423"/>
    <lineage>
        <taxon>Bacteria</taxon>
        <taxon>Bacillati</taxon>
        <taxon>Bacillota</taxon>
        <taxon>Bacilli</taxon>
        <taxon>Bacillales</taxon>
        <taxon>Bacillaceae</taxon>
        <taxon>Bacillus</taxon>
        <taxon>Bacillus amyloliquefaciens group</taxon>
    </lineage>
</organism>
<name>PANB_BACVZ</name>
<dbReference type="EC" id="2.1.2.11" evidence="1"/>
<dbReference type="EMBL" id="CP000560">
    <property type="protein sequence ID" value="ABS74420.1"/>
    <property type="molecule type" value="Genomic_DNA"/>
</dbReference>
<dbReference type="RefSeq" id="WP_012117845.1">
    <property type="nucleotide sequence ID" value="NC_009725.2"/>
</dbReference>
<dbReference type="SMR" id="A7Z5Z4"/>
<dbReference type="GeneID" id="93081193"/>
<dbReference type="KEGG" id="bay:RBAM_020580"/>
<dbReference type="HOGENOM" id="CLU_036645_1_0_9"/>
<dbReference type="UniPathway" id="UPA00028">
    <property type="reaction ID" value="UER00003"/>
</dbReference>
<dbReference type="Proteomes" id="UP000001120">
    <property type="component" value="Chromosome"/>
</dbReference>
<dbReference type="GO" id="GO:0005737">
    <property type="term" value="C:cytoplasm"/>
    <property type="evidence" value="ECO:0007669"/>
    <property type="project" value="UniProtKB-SubCell"/>
</dbReference>
<dbReference type="GO" id="GO:0003864">
    <property type="term" value="F:3-methyl-2-oxobutanoate hydroxymethyltransferase activity"/>
    <property type="evidence" value="ECO:0007669"/>
    <property type="project" value="UniProtKB-UniRule"/>
</dbReference>
<dbReference type="GO" id="GO:0000287">
    <property type="term" value="F:magnesium ion binding"/>
    <property type="evidence" value="ECO:0007669"/>
    <property type="project" value="TreeGrafter"/>
</dbReference>
<dbReference type="GO" id="GO:0015940">
    <property type="term" value="P:pantothenate biosynthetic process"/>
    <property type="evidence" value="ECO:0007669"/>
    <property type="project" value="UniProtKB-UniRule"/>
</dbReference>
<dbReference type="CDD" id="cd06557">
    <property type="entry name" value="KPHMT-like"/>
    <property type="match status" value="1"/>
</dbReference>
<dbReference type="FunFam" id="3.20.20.60:FF:000003">
    <property type="entry name" value="3-methyl-2-oxobutanoate hydroxymethyltransferase"/>
    <property type="match status" value="1"/>
</dbReference>
<dbReference type="Gene3D" id="3.20.20.60">
    <property type="entry name" value="Phosphoenolpyruvate-binding domains"/>
    <property type="match status" value="1"/>
</dbReference>
<dbReference type="HAMAP" id="MF_00156">
    <property type="entry name" value="PanB"/>
    <property type="match status" value="1"/>
</dbReference>
<dbReference type="InterPro" id="IPR003700">
    <property type="entry name" value="Pantoate_hydroxy_MeTrfase"/>
</dbReference>
<dbReference type="InterPro" id="IPR015813">
    <property type="entry name" value="Pyrv/PenolPyrv_kinase-like_dom"/>
</dbReference>
<dbReference type="InterPro" id="IPR040442">
    <property type="entry name" value="Pyrv_kinase-like_dom_sf"/>
</dbReference>
<dbReference type="NCBIfam" id="TIGR00222">
    <property type="entry name" value="panB"/>
    <property type="match status" value="1"/>
</dbReference>
<dbReference type="NCBIfam" id="NF001452">
    <property type="entry name" value="PRK00311.1"/>
    <property type="match status" value="1"/>
</dbReference>
<dbReference type="PANTHER" id="PTHR20881">
    <property type="entry name" value="3-METHYL-2-OXOBUTANOATE HYDROXYMETHYLTRANSFERASE"/>
    <property type="match status" value="1"/>
</dbReference>
<dbReference type="PANTHER" id="PTHR20881:SF0">
    <property type="entry name" value="3-METHYL-2-OXOBUTANOATE HYDROXYMETHYLTRANSFERASE"/>
    <property type="match status" value="1"/>
</dbReference>
<dbReference type="Pfam" id="PF02548">
    <property type="entry name" value="Pantoate_transf"/>
    <property type="match status" value="1"/>
</dbReference>
<dbReference type="PIRSF" id="PIRSF000388">
    <property type="entry name" value="Pantoate_hydroxy_MeTrfase"/>
    <property type="match status" value="1"/>
</dbReference>
<dbReference type="SUPFAM" id="SSF51621">
    <property type="entry name" value="Phosphoenolpyruvate/pyruvate domain"/>
    <property type="match status" value="1"/>
</dbReference>
<protein>
    <recommendedName>
        <fullName evidence="1">3-methyl-2-oxobutanoate hydroxymethyltransferase</fullName>
        <ecNumber evidence="1">2.1.2.11</ecNumber>
    </recommendedName>
    <alternativeName>
        <fullName evidence="1">Ketopantoate hydroxymethyltransferase</fullName>
        <shortName evidence="1">KPHMT</shortName>
    </alternativeName>
</protein>